<sequence length="362" mass="38947">MSFNTFGHMFRVTTFGESHGVAIGCVVDGCPPMIPLTEADIQGDLDRRRPGQSRFTTQRQEPDQVKILSGVMAHPETGVQVTTGTPIGLLIENTDQRSKDYSEIKDKFRPGHADFTYEAKYGLRDYRGGGRSSARETATRVAAGAIARKVLPDVKVRGALVQMGPHKIDREKWDWDEVARNPFFCPDKDKAAFFETYLDGIRKSGSSIGAVLEIVAEGVPAGLGAPIYAKLDSDLAGAMMTINAVKGVEIGAGFGAAELTGEENADEMRTGNDGTRFLSNHAGGVLGGISTGQPVVVRFAVKPTSSILQPRLTVDRQGADTEIMTKGRHDPCVGIRAVPVGEAMMACVLADHFIRDRGQVGR</sequence>
<accession>Q89RY1</accession>
<evidence type="ECO:0000255" key="1">
    <source>
        <dbReference type="HAMAP-Rule" id="MF_00300"/>
    </source>
</evidence>
<organism>
    <name type="scientific">Bradyrhizobium diazoefficiens (strain JCM 10833 / BCRC 13528 / IAM 13628 / NBRC 14792 / USDA 110)</name>
    <dbReference type="NCBI Taxonomy" id="224911"/>
    <lineage>
        <taxon>Bacteria</taxon>
        <taxon>Pseudomonadati</taxon>
        <taxon>Pseudomonadota</taxon>
        <taxon>Alphaproteobacteria</taxon>
        <taxon>Hyphomicrobiales</taxon>
        <taxon>Nitrobacteraceae</taxon>
        <taxon>Bradyrhizobium</taxon>
    </lineage>
</organism>
<gene>
    <name evidence="1" type="primary">aroC</name>
    <name type="ordered locus">blr2631</name>
</gene>
<protein>
    <recommendedName>
        <fullName evidence="1">Chorismate synthase</fullName>
        <shortName evidence="1">CS</shortName>
        <ecNumber evidence="1">4.2.3.5</ecNumber>
    </recommendedName>
    <alternativeName>
        <fullName evidence="1">5-enolpyruvylshikimate-3-phosphate phospholyase</fullName>
    </alternativeName>
</protein>
<proteinExistence type="inferred from homology"/>
<reference key="1">
    <citation type="journal article" date="2002" name="DNA Res.">
        <title>Complete genomic sequence of nitrogen-fixing symbiotic bacterium Bradyrhizobium japonicum USDA110.</title>
        <authorList>
            <person name="Kaneko T."/>
            <person name="Nakamura Y."/>
            <person name="Sato S."/>
            <person name="Minamisawa K."/>
            <person name="Uchiumi T."/>
            <person name="Sasamoto S."/>
            <person name="Watanabe A."/>
            <person name="Idesawa K."/>
            <person name="Iriguchi M."/>
            <person name="Kawashima K."/>
            <person name="Kohara M."/>
            <person name="Matsumoto M."/>
            <person name="Shimpo S."/>
            <person name="Tsuruoka H."/>
            <person name="Wada T."/>
            <person name="Yamada M."/>
            <person name="Tabata S."/>
        </authorList>
    </citation>
    <scope>NUCLEOTIDE SEQUENCE [LARGE SCALE GENOMIC DNA]</scope>
    <source>
        <strain>JCM 10833 / BCRC 13528 / IAM 13628 / NBRC 14792 / USDA 110</strain>
    </source>
</reference>
<comment type="function">
    <text evidence="1">Catalyzes the anti-1,4-elimination of the C-3 phosphate and the C-6 proR hydrogen from 5-enolpyruvylshikimate-3-phosphate (EPSP) to yield chorismate, which is the branch point compound that serves as the starting substrate for the three terminal pathways of aromatic amino acid biosynthesis. This reaction introduces a second double bond into the aromatic ring system.</text>
</comment>
<comment type="catalytic activity">
    <reaction evidence="1">
        <text>5-O-(1-carboxyvinyl)-3-phosphoshikimate = chorismate + phosphate</text>
        <dbReference type="Rhea" id="RHEA:21020"/>
        <dbReference type="ChEBI" id="CHEBI:29748"/>
        <dbReference type="ChEBI" id="CHEBI:43474"/>
        <dbReference type="ChEBI" id="CHEBI:57701"/>
        <dbReference type="EC" id="4.2.3.5"/>
    </reaction>
</comment>
<comment type="cofactor">
    <cofactor evidence="1">
        <name>FMNH2</name>
        <dbReference type="ChEBI" id="CHEBI:57618"/>
    </cofactor>
    <text evidence="1">Reduced FMN (FMNH(2)).</text>
</comment>
<comment type="pathway">
    <text evidence="1">Metabolic intermediate biosynthesis; chorismate biosynthesis; chorismate from D-erythrose 4-phosphate and phosphoenolpyruvate: step 7/7.</text>
</comment>
<comment type="subunit">
    <text evidence="1">Homotetramer.</text>
</comment>
<comment type="similarity">
    <text evidence="1">Belongs to the chorismate synthase family.</text>
</comment>
<keyword id="KW-0028">Amino-acid biosynthesis</keyword>
<keyword id="KW-0057">Aromatic amino acid biosynthesis</keyword>
<keyword id="KW-0274">FAD</keyword>
<keyword id="KW-0285">Flavoprotein</keyword>
<keyword id="KW-0288">FMN</keyword>
<keyword id="KW-0456">Lyase</keyword>
<keyword id="KW-0521">NADP</keyword>
<keyword id="KW-1185">Reference proteome</keyword>
<dbReference type="EC" id="4.2.3.5" evidence="1"/>
<dbReference type="EMBL" id="BA000040">
    <property type="protein sequence ID" value="BAC47896.1"/>
    <property type="molecule type" value="Genomic_DNA"/>
</dbReference>
<dbReference type="RefSeq" id="NP_769271.1">
    <property type="nucleotide sequence ID" value="NC_004463.1"/>
</dbReference>
<dbReference type="RefSeq" id="WP_011085417.1">
    <property type="nucleotide sequence ID" value="NC_004463.1"/>
</dbReference>
<dbReference type="SMR" id="Q89RY1"/>
<dbReference type="FunCoup" id="Q89RY1">
    <property type="interactions" value="603"/>
</dbReference>
<dbReference type="STRING" id="224911.AAV28_10150"/>
<dbReference type="EnsemblBacteria" id="BAC47896">
    <property type="protein sequence ID" value="BAC47896"/>
    <property type="gene ID" value="BAC47896"/>
</dbReference>
<dbReference type="GeneID" id="46489679"/>
<dbReference type="KEGG" id="bja:blr2631"/>
<dbReference type="PATRIC" id="fig|224911.44.peg.2231"/>
<dbReference type="eggNOG" id="COG0082">
    <property type="taxonomic scope" value="Bacteria"/>
</dbReference>
<dbReference type="HOGENOM" id="CLU_034547_0_0_5"/>
<dbReference type="InParanoid" id="Q89RY1"/>
<dbReference type="OrthoDB" id="9771806at2"/>
<dbReference type="PhylomeDB" id="Q89RY1"/>
<dbReference type="UniPathway" id="UPA00053">
    <property type="reaction ID" value="UER00090"/>
</dbReference>
<dbReference type="Proteomes" id="UP000002526">
    <property type="component" value="Chromosome"/>
</dbReference>
<dbReference type="GO" id="GO:0005829">
    <property type="term" value="C:cytosol"/>
    <property type="evidence" value="ECO:0000318"/>
    <property type="project" value="GO_Central"/>
</dbReference>
<dbReference type="GO" id="GO:0004107">
    <property type="term" value="F:chorismate synthase activity"/>
    <property type="evidence" value="ECO:0000318"/>
    <property type="project" value="GO_Central"/>
</dbReference>
<dbReference type="GO" id="GO:0010181">
    <property type="term" value="F:FMN binding"/>
    <property type="evidence" value="ECO:0000318"/>
    <property type="project" value="GO_Central"/>
</dbReference>
<dbReference type="GO" id="GO:0008652">
    <property type="term" value="P:amino acid biosynthetic process"/>
    <property type="evidence" value="ECO:0007669"/>
    <property type="project" value="UniProtKB-KW"/>
</dbReference>
<dbReference type="GO" id="GO:0009073">
    <property type="term" value="P:aromatic amino acid family biosynthetic process"/>
    <property type="evidence" value="ECO:0000318"/>
    <property type="project" value="GO_Central"/>
</dbReference>
<dbReference type="GO" id="GO:0009423">
    <property type="term" value="P:chorismate biosynthetic process"/>
    <property type="evidence" value="ECO:0000318"/>
    <property type="project" value="GO_Central"/>
</dbReference>
<dbReference type="CDD" id="cd07304">
    <property type="entry name" value="Chorismate_synthase"/>
    <property type="match status" value="1"/>
</dbReference>
<dbReference type="FunFam" id="3.60.150.10:FF:000010">
    <property type="entry name" value="Chorismate synthase"/>
    <property type="match status" value="1"/>
</dbReference>
<dbReference type="Gene3D" id="3.60.150.10">
    <property type="entry name" value="Chorismate synthase AroC"/>
    <property type="match status" value="1"/>
</dbReference>
<dbReference type="HAMAP" id="MF_00300">
    <property type="entry name" value="Chorismate_synth"/>
    <property type="match status" value="1"/>
</dbReference>
<dbReference type="InterPro" id="IPR000453">
    <property type="entry name" value="Chorismate_synth"/>
</dbReference>
<dbReference type="InterPro" id="IPR035904">
    <property type="entry name" value="Chorismate_synth_AroC_sf"/>
</dbReference>
<dbReference type="InterPro" id="IPR020541">
    <property type="entry name" value="Chorismate_synthase_CS"/>
</dbReference>
<dbReference type="NCBIfam" id="TIGR00033">
    <property type="entry name" value="aroC"/>
    <property type="match status" value="1"/>
</dbReference>
<dbReference type="NCBIfam" id="NF003793">
    <property type="entry name" value="PRK05382.1"/>
    <property type="match status" value="1"/>
</dbReference>
<dbReference type="PANTHER" id="PTHR21085">
    <property type="entry name" value="CHORISMATE SYNTHASE"/>
    <property type="match status" value="1"/>
</dbReference>
<dbReference type="PANTHER" id="PTHR21085:SF0">
    <property type="entry name" value="CHORISMATE SYNTHASE"/>
    <property type="match status" value="1"/>
</dbReference>
<dbReference type="Pfam" id="PF01264">
    <property type="entry name" value="Chorismate_synt"/>
    <property type="match status" value="1"/>
</dbReference>
<dbReference type="PIRSF" id="PIRSF001456">
    <property type="entry name" value="Chorismate_synth"/>
    <property type="match status" value="1"/>
</dbReference>
<dbReference type="SUPFAM" id="SSF103263">
    <property type="entry name" value="Chorismate synthase, AroC"/>
    <property type="match status" value="1"/>
</dbReference>
<dbReference type="PROSITE" id="PS00787">
    <property type="entry name" value="CHORISMATE_SYNTHASE_1"/>
    <property type="match status" value="1"/>
</dbReference>
<dbReference type="PROSITE" id="PS00788">
    <property type="entry name" value="CHORISMATE_SYNTHASE_2"/>
    <property type="match status" value="1"/>
</dbReference>
<dbReference type="PROSITE" id="PS00789">
    <property type="entry name" value="CHORISMATE_SYNTHASE_3"/>
    <property type="match status" value="1"/>
</dbReference>
<name>AROC_BRADU</name>
<feature type="chain" id="PRO_0000140560" description="Chorismate synthase">
    <location>
        <begin position="1"/>
        <end position="362"/>
    </location>
</feature>
<feature type="binding site" evidence="1">
    <location>
        <position position="48"/>
    </location>
    <ligand>
        <name>NADP(+)</name>
        <dbReference type="ChEBI" id="CHEBI:58349"/>
    </ligand>
</feature>
<feature type="binding site" evidence="1">
    <location>
        <position position="54"/>
    </location>
    <ligand>
        <name>NADP(+)</name>
        <dbReference type="ChEBI" id="CHEBI:58349"/>
    </ligand>
</feature>
<feature type="binding site" evidence="1">
    <location>
        <begin position="131"/>
        <end position="133"/>
    </location>
    <ligand>
        <name>FMN</name>
        <dbReference type="ChEBI" id="CHEBI:58210"/>
    </ligand>
</feature>
<feature type="binding site" evidence="1">
    <location>
        <begin position="243"/>
        <end position="244"/>
    </location>
    <ligand>
        <name>FMN</name>
        <dbReference type="ChEBI" id="CHEBI:58210"/>
    </ligand>
</feature>
<feature type="binding site" evidence="1">
    <location>
        <position position="287"/>
    </location>
    <ligand>
        <name>FMN</name>
        <dbReference type="ChEBI" id="CHEBI:58210"/>
    </ligand>
</feature>
<feature type="binding site" evidence="1">
    <location>
        <begin position="302"/>
        <end position="306"/>
    </location>
    <ligand>
        <name>FMN</name>
        <dbReference type="ChEBI" id="CHEBI:58210"/>
    </ligand>
</feature>
<feature type="binding site" evidence="1">
    <location>
        <position position="328"/>
    </location>
    <ligand>
        <name>FMN</name>
        <dbReference type="ChEBI" id="CHEBI:58210"/>
    </ligand>
</feature>